<reference key="1">
    <citation type="journal article" date="2008" name="J. Bacteriol.">
        <title>The complete genome sequence of Escherichia coli DH10B: insights into the biology of a laboratory workhorse.</title>
        <authorList>
            <person name="Durfee T."/>
            <person name="Nelson R."/>
            <person name="Baldwin S."/>
            <person name="Plunkett G. III"/>
            <person name="Burland V."/>
            <person name="Mau B."/>
            <person name="Petrosino J.F."/>
            <person name="Qin X."/>
            <person name="Muzny D.M."/>
            <person name="Ayele M."/>
            <person name="Gibbs R.A."/>
            <person name="Csorgo B."/>
            <person name="Posfai G."/>
            <person name="Weinstock G.M."/>
            <person name="Blattner F.R."/>
        </authorList>
    </citation>
    <scope>NUCLEOTIDE SEQUENCE [LARGE SCALE GENOMIC DNA]</scope>
    <source>
        <strain>K12 / DH10B</strain>
    </source>
</reference>
<proteinExistence type="inferred from homology"/>
<organism>
    <name type="scientific">Escherichia coli (strain K12 / DH10B)</name>
    <dbReference type="NCBI Taxonomy" id="316385"/>
    <lineage>
        <taxon>Bacteria</taxon>
        <taxon>Pseudomonadati</taxon>
        <taxon>Pseudomonadota</taxon>
        <taxon>Gammaproteobacteria</taxon>
        <taxon>Enterobacterales</taxon>
        <taxon>Enterobacteriaceae</taxon>
        <taxon>Escherichia</taxon>
    </lineage>
</organism>
<dbReference type="EC" id="2.7.2.8" evidence="1"/>
<dbReference type="EMBL" id="CP000948">
    <property type="protein sequence ID" value="ACB04970.1"/>
    <property type="molecule type" value="Genomic_DNA"/>
</dbReference>
<dbReference type="SMR" id="B1XBC4"/>
<dbReference type="KEGG" id="ecd:ECDH10B_4147"/>
<dbReference type="HOGENOM" id="CLU_053680_1_1_6"/>
<dbReference type="UniPathway" id="UPA00068">
    <property type="reaction ID" value="UER00107"/>
</dbReference>
<dbReference type="GO" id="GO:0005737">
    <property type="term" value="C:cytoplasm"/>
    <property type="evidence" value="ECO:0007669"/>
    <property type="project" value="UniProtKB-SubCell"/>
</dbReference>
<dbReference type="GO" id="GO:0003991">
    <property type="term" value="F:acetylglutamate kinase activity"/>
    <property type="evidence" value="ECO:0007669"/>
    <property type="project" value="UniProtKB-UniRule"/>
</dbReference>
<dbReference type="GO" id="GO:0005524">
    <property type="term" value="F:ATP binding"/>
    <property type="evidence" value="ECO:0007669"/>
    <property type="project" value="UniProtKB-UniRule"/>
</dbReference>
<dbReference type="GO" id="GO:0042450">
    <property type="term" value="P:arginine biosynthetic process via ornithine"/>
    <property type="evidence" value="ECO:0007669"/>
    <property type="project" value="UniProtKB-UniRule"/>
</dbReference>
<dbReference type="GO" id="GO:0006526">
    <property type="term" value="P:L-arginine biosynthetic process"/>
    <property type="evidence" value="ECO:0007669"/>
    <property type="project" value="UniProtKB-UniPathway"/>
</dbReference>
<dbReference type="CDD" id="cd04249">
    <property type="entry name" value="AAK_NAGK-NC"/>
    <property type="match status" value="1"/>
</dbReference>
<dbReference type="FunFam" id="3.40.1160.10:FF:000008">
    <property type="entry name" value="Acetylglutamate kinase"/>
    <property type="match status" value="1"/>
</dbReference>
<dbReference type="Gene3D" id="3.40.1160.10">
    <property type="entry name" value="Acetylglutamate kinase-like"/>
    <property type="match status" value="1"/>
</dbReference>
<dbReference type="HAMAP" id="MF_00082">
    <property type="entry name" value="ArgB"/>
    <property type="match status" value="1"/>
</dbReference>
<dbReference type="InterPro" id="IPR036393">
    <property type="entry name" value="AceGlu_kinase-like_sf"/>
</dbReference>
<dbReference type="InterPro" id="IPR004662">
    <property type="entry name" value="AcgluKinase_fam"/>
</dbReference>
<dbReference type="InterPro" id="IPR037528">
    <property type="entry name" value="ArgB"/>
</dbReference>
<dbReference type="InterPro" id="IPR001048">
    <property type="entry name" value="Asp/Glu/Uridylate_kinase"/>
</dbReference>
<dbReference type="InterPro" id="IPR041731">
    <property type="entry name" value="NAGK-NC"/>
</dbReference>
<dbReference type="NCBIfam" id="TIGR00761">
    <property type="entry name" value="argB"/>
    <property type="match status" value="1"/>
</dbReference>
<dbReference type="PANTHER" id="PTHR23342">
    <property type="entry name" value="N-ACETYLGLUTAMATE SYNTHASE"/>
    <property type="match status" value="1"/>
</dbReference>
<dbReference type="PANTHER" id="PTHR23342:SF0">
    <property type="entry name" value="N-ACETYLGLUTAMATE SYNTHASE, MITOCHONDRIAL"/>
    <property type="match status" value="1"/>
</dbReference>
<dbReference type="Pfam" id="PF00696">
    <property type="entry name" value="AA_kinase"/>
    <property type="match status" value="1"/>
</dbReference>
<dbReference type="PIRSF" id="PIRSF000728">
    <property type="entry name" value="NAGK"/>
    <property type="match status" value="1"/>
</dbReference>
<dbReference type="SUPFAM" id="SSF53633">
    <property type="entry name" value="Carbamate kinase-like"/>
    <property type="match status" value="1"/>
</dbReference>
<comment type="function">
    <text evidence="1">Catalyzes the ATP-dependent phosphorylation of N-acetyl-L-glutamate.</text>
</comment>
<comment type="catalytic activity">
    <reaction evidence="1">
        <text>N-acetyl-L-glutamate + ATP = N-acetyl-L-glutamyl 5-phosphate + ADP</text>
        <dbReference type="Rhea" id="RHEA:14629"/>
        <dbReference type="ChEBI" id="CHEBI:30616"/>
        <dbReference type="ChEBI" id="CHEBI:44337"/>
        <dbReference type="ChEBI" id="CHEBI:57936"/>
        <dbReference type="ChEBI" id="CHEBI:456216"/>
        <dbReference type="EC" id="2.7.2.8"/>
    </reaction>
</comment>
<comment type="pathway">
    <text evidence="1">Amino-acid biosynthesis; L-arginine biosynthesis; N(2)-acetyl-L-ornithine from L-glutamate: step 2/4.</text>
</comment>
<comment type="subunit">
    <text evidence="1">Homodimer.</text>
</comment>
<comment type="subcellular location">
    <subcellularLocation>
        <location evidence="1">Cytoplasm</location>
    </subcellularLocation>
</comment>
<comment type="similarity">
    <text evidence="1">Belongs to the acetylglutamate kinase family. ArgB subfamily.</text>
</comment>
<evidence type="ECO:0000255" key="1">
    <source>
        <dbReference type="HAMAP-Rule" id="MF_00082"/>
    </source>
</evidence>
<feature type="chain" id="PRO_1000092857" description="Acetylglutamate kinase">
    <location>
        <begin position="1"/>
        <end position="257"/>
    </location>
</feature>
<feature type="binding site" evidence="1">
    <location>
        <begin position="43"/>
        <end position="44"/>
    </location>
    <ligand>
        <name>substrate</name>
    </ligand>
</feature>
<feature type="binding site" evidence="1">
    <location>
        <position position="65"/>
    </location>
    <ligand>
        <name>substrate</name>
    </ligand>
</feature>
<feature type="binding site" evidence="1">
    <location>
        <position position="157"/>
    </location>
    <ligand>
        <name>substrate</name>
    </ligand>
</feature>
<feature type="binding site" evidence="1">
    <location>
        <begin position="180"/>
        <end position="185"/>
    </location>
    <ligand>
        <name>ATP</name>
        <dbReference type="ChEBI" id="CHEBI:30616"/>
    </ligand>
</feature>
<feature type="binding site" evidence="1">
    <location>
        <begin position="208"/>
        <end position="210"/>
    </location>
    <ligand>
        <name>ATP</name>
        <dbReference type="ChEBI" id="CHEBI:30616"/>
    </ligand>
</feature>
<feature type="site" description="Transition state stabilizer" evidence="1">
    <location>
        <position position="7"/>
    </location>
</feature>
<feature type="site" description="Transition state stabilizer" evidence="1">
    <location>
        <position position="216"/>
    </location>
</feature>
<keyword id="KW-0028">Amino-acid biosynthesis</keyword>
<keyword id="KW-0055">Arginine biosynthesis</keyword>
<keyword id="KW-0067">ATP-binding</keyword>
<keyword id="KW-0963">Cytoplasm</keyword>
<keyword id="KW-0418">Kinase</keyword>
<keyword id="KW-0547">Nucleotide-binding</keyword>
<keyword id="KW-0808">Transferase</keyword>
<accession>B1XBC4</accession>
<gene>
    <name evidence="1" type="primary">argB</name>
    <name type="ordered locus">ECDH10B_4147</name>
</gene>
<protein>
    <recommendedName>
        <fullName evidence="1">Acetylglutamate kinase</fullName>
        <ecNumber evidence="1">2.7.2.8</ecNumber>
    </recommendedName>
    <alternativeName>
        <fullName evidence="1">N-acetyl-L-glutamate 5-phosphotransferase</fullName>
    </alternativeName>
    <alternativeName>
        <fullName evidence="1">NAG kinase</fullName>
        <shortName evidence="1">NAGK</shortName>
    </alternativeName>
</protein>
<sequence length="257" mass="27028">MNPLIIKLGGVLLDSEEALERLFSALVNYRESHQRPLVIVHGGGCVVDELMKGLNLPVKKKNGLRVTPADQIDIITGALAGTANKTLLAWAKKHQIAAVGLFLGDGDSVKVTQLDEELGHVGLAQPGSPKLINSLLENGYLPVVSSIGVTDEGQLMNVNADQAATALAATLGADLILLSDVSGILDGKGQRIAEMTAAKAEQLIEQGIITDGMIVKVNAALDAARTLGRPVDIASWRHAEQLPALFNGMPMGTRILA</sequence>
<name>ARGB_ECODH</name>